<dbReference type="EC" id="3.1.11.2" evidence="3 19"/>
<dbReference type="EMBL" id="AJ243797">
    <property type="protein sequence ID" value="CAB50866.1"/>
    <property type="molecule type" value="mRNA"/>
</dbReference>
<dbReference type="EMBL" id="AF151105">
    <property type="protein sequence ID" value="AAD48774.2"/>
    <property type="status" value="ALT_INIT"/>
    <property type="molecule type" value="mRNA"/>
</dbReference>
<dbReference type="EMBL" id="AF319566">
    <property type="protein sequence ID" value="AAK07613.1"/>
    <property type="molecule type" value="mRNA"/>
</dbReference>
<dbReference type="EMBL" id="AF319567">
    <property type="protein sequence ID" value="AAK07614.1"/>
    <property type="molecule type" value="mRNA"/>
</dbReference>
<dbReference type="EMBL" id="AF319568">
    <property type="protein sequence ID" value="AAK07615.1"/>
    <property type="molecule type" value="mRNA"/>
</dbReference>
<dbReference type="EMBL" id="AF319569">
    <property type="protein sequence ID" value="AAK07616.1"/>
    <property type="molecule type" value="mRNA"/>
</dbReference>
<dbReference type="EMBL" id="AK315196">
    <property type="protein sequence ID" value="BAG37636.1"/>
    <property type="molecule type" value="mRNA"/>
</dbReference>
<dbReference type="EMBL" id="AL137745">
    <property type="status" value="NOT_ANNOTATED_CDS"/>
    <property type="molecule type" value="mRNA"/>
</dbReference>
<dbReference type="EMBL" id="AF483777">
    <property type="protein sequence ID" value="AAL82504.1"/>
    <property type="status" value="ALT_INIT"/>
    <property type="molecule type" value="Genomic_DNA"/>
</dbReference>
<dbReference type="EMBL" id="BC023630">
    <property type="protein sequence ID" value="AAH23630.1"/>
    <property type="molecule type" value="mRNA"/>
</dbReference>
<dbReference type="CCDS" id="CCDS2769.1">
    <molecule id="Q9NSU2-3"/>
</dbReference>
<dbReference type="CCDS" id="CCDS59451.1">
    <molecule id="Q9NSU2-2"/>
</dbReference>
<dbReference type="PIR" id="T46299">
    <property type="entry name" value="T46299"/>
</dbReference>
<dbReference type="RefSeq" id="NP_009179.2">
    <molecule id="Q9NSU2-2"/>
    <property type="nucleotide sequence ID" value="NM_007248.3"/>
</dbReference>
<dbReference type="RefSeq" id="NP_057465.1">
    <property type="nucleotide sequence ID" value="NM_016381.5"/>
</dbReference>
<dbReference type="RefSeq" id="NP_338599.1">
    <molecule id="Q9NSU2-3"/>
    <property type="nucleotide sequence ID" value="NM_033629.6"/>
</dbReference>
<dbReference type="PDB" id="7TQN">
    <property type="method" value="X-ray"/>
    <property type="resolution" value="1.80 A"/>
    <property type="chains" value="A=1-242"/>
</dbReference>
<dbReference type="PDB" id="7TQO">
    <property type="method" value="X-ray"/>
    <property type="resolution" value="1.25 A"/>
    <property type="chains" value="A=1-242"/>
</dbReference>
<dbReference type="PDB" id="7TQP">
    <property type="method" value="X-ray"/>
    <property type="resolution" value="1.95 A"/>
    <property type="chains" value="A=1-242"/>
</dbReference>
<dbReference type="PDB" id="7TQQ">
    <property type="method" value="X-ray"/>
    <property type="resolution" value="2.20 A"/>
    <property type="chains" value="A/B/E/F=1-242"/>
</dbReference>
<dbReference type="PDB" id="8VL7">
    <property type="method" value="X-ray"/>
    <property type="resolution" value="1.88 A"/>
    <property type="chains" value="A/B/C/D/E/F/G/H=2-234"/>
</dbReference>
<dbReference type="PDB" id="9AVA">
    <property type="method" value="X-ray"/>
    <property type="resolution" value="2.30 A"/>
    <property type="chains" value="A/B/C/D/E/F/G/H/I/J/K/L=5-234"/>
</dbReference>
<dbReference type="PDBsum" id="7TQN"/>
<dbReference type="PDBsum" id="7TQO"/>
<dbReference type="PDBsum" id="7TQP"/>
<dbReference type="PDBsum" id="7TQQ"/>
<dbReference type="PDBsum" id="8VL7"/>
<dbReference type="PDBsum" id="9AVA"/>
<dbReference type="SMR" id="Q9NSU2"/>
<dbReference type="BioGRID" id="116433">
    <property type="interactions" value="53"/>
</dbReference>
<dbReference type="FunCoup" id="Q9NSU2">
    <property type="interactions" value="589"/>
</dbReference>
<dbReference type="IntAct" id="Q9NSU2">
    <property type="interactions" value="38"/>
</dbReference>
<dbReference type="STRING" id="9606.ENSP00000486676"/>
<dbReference type="BindingDB" id="Q9NSU2"/>
<dbReference type="GlyGen" id="Q9NSU2">
    <property type="glycosylation" value="1 site"/>
</dbReference>
<dbReference type="iPTMnet" id="Q9NSU2"/>
<dbReference type="PhosphoSitePlus" id="Q9NSU2"/>
<dbReference type="BioMuta" id="TREX1"/>
<dbReference type="DMDM" id="47606216"/>
<dbReference type="jPOST" id="Q9NSU2"/>
<dbReference type="MassIVE" id="Q9NSU2"/>
<dbReference type="PaxDb" id="9606-ENSP00000296443"/>
<dbReference type="PeptideAtlas" id="Q9NSU2"/>
<dbReference type="ProteomicsDB" id="82580">
    <molecule id="Q9NSU2-1"/>
</dbReference>
<dbReference type="ProteomicsDB" id="82581">
    <molecule id="Q9NSU2-2"/>
</dbReference>
<dbReference type="ProteomicsDB" id="82582">
    <molecule id="Q9NSU2-3"/>
</dbReference>
<dbReference type="Pumba" id="Q9NSU2"/>
<dbReference type="Antibodypedia" id="30103">
    <property type="antibodies" value="303 antibodies from 35 providers"/>
</dbReference>
<dbReference type="DNASU" id="11277"/>
<dbReference type="Ensembl" id="ENST00000444177.1">
    <molecule id="Q9NSU2-2"/>
    <property type="protein sequence ID" value="ENSP00000415972.1"/>
    <property type="gene ID" value="ENSG00000213689.14"/>
</dbReference>
<dbReference type="Ensembl" id="ENST00000625293.3">
    <molecule id="Q9NSU2-3"/>
    <property type="protein sequence ID" value="ENSP00000486676.2"/>
    <property type="gene ID" value="ENSG00000213689.14"/>
</dbReference>
<dbReference type="GeneID" id="11277"/>
<dbReference type="KEGG" id="hsa:11277"/>
<dbReference type="MANE-Select" id="ENST00000625293.3">
    <property type="protein sequence ID" value="ENSP00000486676.2"/>
    <property type="RefSeq nucleotide sequence ID" value="NM_033629.6"/>
    <property type="RefSeq protein sequence ID" value="NP_338599.1"/>
</dbReference>
<dbReference type="UCSC" id="uc031rzp.2">
    <molecule id="Q9NSU2-3"/>
    <property type="organism name" value="human"/>
</dbReference>
<dbReference type="AGR" id="HGNC:12269"/>
<dbReference type="CTD" id="11277"/>
<dbReference type="DisGeNET" id="11277"/>
<dbReference type="GeneCards" id="TREX1"/>
<dbReference type="GeneReviews" id="TREX1"/>
<dbReference type="HGNC" id="HGNC:12269">
    <property type="gene designation" value="TREX1"/>
</dbReference>
<dbReference type="HPA" id="ENSG00000213689">
    <property type="expression patterns" value="Tissue enhanced (choroid)"/>
</dbReference>
<dbReference type="MalaCards" id="TREX1"/>
<dbReference type="MIM" id="152700">
    <property type="type" value="phenotype"/>
</dbReference>
<dbReference type="MIM" id="192315">
    <property type="type" value="phenotype"/>
</dbReference>
<dbReference type="MIM" id="225750">
    <property type="type" value="phenotype"/>
</dbReference>
<dbReference type="MIM" id="606609">
    <property type="type" value="gene"/>
</dbReference>
<dbReference type="MIM" id="610448">
    <property type="type" value="phenotype"/>
</dbReference>
<dbReference type="neXtProt" id="NX_Q9NSU2"/>
<dbReference type="OpenTargets" id="ENSG00000213689"/>
<dbReference type="Orphanet" id="51">
    <property type="disease" value="Aicardi-Goutieres syndrome"/>
</dbReference>
<dbReference type="Orphanet" id="481662">
    <property type="disease" value="Familial Chilblain lupus"/>
</dbReference>
<dbReference type="Orphanet" id="247691">
    <property type="disease" value="Retinal vasculopathy with cerebral leukoencephalopathy and systemic manifestations"/>
</dbReference>
<dbReference type="Orphanet" id="536">
    <property type="disease" value="Systemic lupus erythematosus"/>
</dbReference>
<dbReference type="PharmGKB" id="PA36949"/>
<dbReference type="VEuPathDB" id="HostDB:ENSG00000213689"/>
<dbReference type="eggNOG" id="KOG4793">
    <property type="taxonomic scope" value="Eukaryota"/>
</dbReference>
<dbReference type="GeneTree" id="ENSGT00390000012715"/>
<dbReference type="HOGENOM" id="CLU_067419_1_0_1"/>
<dbReference type="InParanoid" id="Q9NSU2"/>
<dbReference type="OMA" id="ICQWRPR"/>
<dbReference type="OrthoDB" id="10250935at2759"/>
<dbReference type="PAN-GO" id="Q9NSU2">
    <property type="GO annotations" value="3 GO annotations based on evolutionary models"/>
</dbReference>
<dbReference type="PhylomeDB" id="Q9NSU2"/>
<dbReference type="TreeFam" id="TF323333"/>
<dbReference type="BRENDA" id="3.1.11.2">
    <property type="organism ID" value="2681"/>
</dbReference>
<dbReference type="PathwayCommons" id="Q9NSU2"/>
<dbReference type="Reactome" id="R-HSA-3248023">
    <property type="pathway name" value="Regulation by TREX1"/>
</dbReference>
<dbReference type="Reactome" id="R-HSA-3270619">
    <property type="pathway name" value="IRF3-mediated induction of type I IFN"/>
</dbReference>
<dbReference type="SignaLink" id="Q9NSU2"/>
<dbReference type="BioGRID-ORCS" id="11277">
    <property type="hits" value="9 hits in 1161 CRISPR screens"/>
</dbReference>
<dbReference type="CD-CODE" id="1A0B17A6">
    <property type="entry name" value="cGAS foci"/>
</dbReference>
<dbReference type="GeneWiki" id="TREX1"/>
<dbReference type="GenomeRNAi" id="11277"/>
<dbReference type="Pharos" id="Q9NSU2">
    <property type="development level" value="Tbio"/>
</dbReference>
<dbReference type="PRO" id="PR:Q9NSU2"/>
<dbReference type="Proteomes" id="UP000005640">
    <property type="component" value="Chromosome 3"/>
</dbReference>
<dbReference type="RNAct" id="Q9NSU2">
    <property type="molecule type" value="protein"/>
</dbReference>
<dbReference type="Bgee" id="ENSG00000213689">
    <property type="expression patterns" value="Expressed in olfactory segment of nasal mucosa and 96 other cell types or tissues"/>
</dbReference>
<dbReference type="ExpressionAtlas" id="Q9NSU2">
    <property type="expression patterns" value="baseline"/>
</dbReference>
<dbReference type="GO" id="GO:0005737">
    <property type="term" value="C:cytoplasm"/>
    <property type="evidence" value="ECO:0000318"/>
    <property type="project" value="GO_Central"/>
</dbReference>
<dbReference type="GO" id="GO:0005829">
    <property type="term" value="C:cytosol"/>
    <property type="evidence" value="ECO:0000314"/>
    <property type="project" value="HPA"/>
</dbReference>
<dbReference type="GO" id="GO:0005789">
    <property type="term" value="C:endoplasmic reticulum membrane"/>
    <property type="evidence" value="ECO:0000314"/>
    <property type="project" value="UniProtKB"/>
</dbReference>
<dbReference type="GO" id="GO:0005635">
    <property type="term" value="C:nuclear envelope"/>
    <property type="evidence" value="ECO:0000303"/>
    <property type="project" value="UniProtKB"/>
</dbReference>
<dbReference type="GO" id="GO:0043596">
    <property type="term" value="C:nuclear replication fork"/>
    <property type="evidence" value="ECO:0007669"/>
    <property type="project" value="Ensembl"/>
</dbReference>
<dbReference type="GO" id="GO:0008250">
    <property type="term" value="C:oligosaccharyltransferase complex"/>
    <property type="evidence" value="ECO:0007669"/>
    <property type="project" value="Ensembl"/>
</dbReference>
<dbReference type="GO" id="GO:0032993">
    <property type="term" value="C:protein-DNA complex"/>
    <property type="evidence" value="ECO:0007669"/>
    <property type="project" value="Ensembl"/>
</dbReference>
<dbReference type="GO" id="GO:0008408">
    <property type="term" value="F:3'-5' exonuclease activity"/>
    <property type="evidence" value="ECO:0000314"/>
    <property type="project" value="UniProtKB"/>
</dbReference>
<dbReference type="GO" id="GO:0008296">
    <property type="term" value="F:3'-5'-DNA exonuclease activity"/>
    <property type="evidence" value="ECO:0000314"/>
    <property type="project" value="UniProtKB"/>
</dbReference>
<dbReference type="GO" id="GO:0032558">
    <property type="term" value="F:adenyl deoxyribonucleotide binding"/>
    <property type="evidence" value="ECO:0007669"/>
    <property type="project" value="Ensembl"/>
</dbReference>
<dbReference type="GO" id="GO:0008301">
    <property type="term" value="F:DNA binding, bending"/>
    <property type="evidence" value="ECO:0007669"/>
    <property type="project" value="Ensembl"/>
</dbReference>
<dbReference type="GO" id="GO:0008311">
    <property type="term" value="F:double-stranded DNA 3'-5' DNA exonuclease activity"/>
    <property type="evidence" value="ECO:0000314"/>
    <property type="project" value="UniProt"/>
</dbReference>
<dbReference type="GO" id="GO:0003690">
    <property type="term" value="F:double-stranded DNA binding"/>
    <property type="evidence" value="ECO:0007669"/>
    <property type="project" value="Ensembl"/>
</dbReference>
<dbReference type="GO" id="GO:0000287">
    <property type="term" value="F:magnesium ion binding"/>
    <property type="evidence" value="ECO:0007669"/>
    <property type="project" value="Ensembl"/>
</dbReference>
<dbReference type="GO" id="GO:0046872">
    <property type="term" value="F:metal ion binding"/>
    <property type="evidence" value="ECO:0000303"/>
    <property type="project" value="UniProtKB"/>
</dbReference>
<dbReference type="GO" id="GO:0032405">
    <property type="term" value="F:MutLalpha complex binding"/>
    <property type="evidence" value="ECO:0000314"/>
    <property type="project" value="MGI"/>
</dbReference>
<dbReference type="GO" id="GO:0032407">
    <property type="term" value="F:MutSalpha complex binding"/>
    <property type="evidence" value="ECO:0000314"/>
    <property type="project" value="MGI"/>
</dbReference>
<dbReference type="GO" id="GO:0042803">
    <property type="term" value="F:protein homodimerization activity"/>
    <property type="evidence" value="ECO:0007669"/>
    <property type="project" value="Ensembl"/>
</dbReference>
<dbReference type="GO" id="GO:0003697">
    <property type="term" value="F:single-stranded DNA binding"/>
    <property type="evidence" value="ECO:0000304"/>
    <property type="project" value="UniProtKB"/>
</dbReference>
<dbReference type="GO" id="GO:0050699">
    <property type="term" value="F:WW domain binding"/>
    <property type="evidence" value="ECO:0007669"/>
    <property type="project" value="Ensembl"/>
</dbReference>
<dbReference type="GO" id="GO:0002253">
    <property type="term" value="P:activation of immune response"/>
    <property type="evidence" value="ECO:0007669"/>
    <property type="project" value="Ensembl"/>
</dbReference>
<dbReference type="GO" id="GO:0043277">
    <property type="term" value="P:apoptotic cell clearance"/>
    <property type="evidence" value="ECO:0007669"/>
    <property type="project" value="Ensembl"/>
</dbReference>
<dbReference type="GO" id="GO:0003228">
    <property type="term" value="P:atrial cardiac muscle tissue development"/>
    <property type="evidence" value="ECO:0007669"/>
    <property type="project" value="Ensembl"/>
</dbReference>
<dbReference type="GO" id="GO:0001568">
    <property type="term" value="P:blood vessel development"/>
    <property type="evidence" value="ECO:0007669"/>
    <property type="project" value="Ensembl"/>
</dbReference>
<dbReference type="GO" id="GO:0071480">
    <property type="term" value="P:cellular response to gamma radiation"/>
    <property type="evidence" value="ECO:0007669"/>
    <property type="project" value="Ensembl"/>
</dbReference>
<dbReference type="GO" id="GO:0072711">
    <property type="term" value="P:cellular response to hydroxyurea"/>
    <property type="evidence" value="ECO:0007669"/>
    <property type="project" value="Ensembl"/>
</dbReference>
<dbReference type="GO" id="GO:0035458">
    <property type="term" value="P:cellular response to interferon-beta"/>
    <property type="evidence" value="ECO:0007669"/>
    <property type="project" value="Ensembl"/>
</dbReference>
<dbReference type="GO" id="GO:0034614">
    <property type="term" value="P:cellular response to reactive oxygen species"/>
    <property type="evidence" value="ECO:0007669"/>
    <property type="project" value="Ensembl"/>
</dbReference>
<dbReference type="GO" id="GO:0051607">
    <property type="term" value="P:defense response to virus"/>
    <property type="evidence" value="ECO:0007669"/>
    <property type="project" value="Ensembl"/>
</dbReference>
<dbReference type="GO" id="GO:0008340">
    <property type="term" value="P:determination of adult lifespan"/>
    <property type="evidence" value="ECO:0007669"/>
    <property type="project" value="Ensembl"/>
</dbReference>
<dbReference type="GO" id="GO:0006308">
    <property type="term" value="P:DNA catabolic process"/>
    <property type="evidence" value="ECO:0000318"/>
    <property type="project" value="GO_Central"/>
</dbReference>
<dbReference type="GO" id="GO:0006259">
    <property type="term" value="P:DNA metabolic process"/>
    <property type="evidence" value="ECO:0000250"/>
    <property type="project" value="UniProtKB"/>
</dbReference>
<dbReference type="GO" id="GO:0006304">
    <property type="term" value="P:DNA modification"/>
    <property type="evidence" value="ECO:0007669"/>
    <property type="project" value="Ensembl"/>
</dbReference>
<dbReference type="GO" id="GO:0006310">
    <property type="term" value="P:DNA recombination"/>
    <property type="evidence" value="ECO:0000303"/>
    <property type="project" value="UniProtKB"/>
</dbReference>
<dbReference type="GO" id="GO:0006281">
    <property type="term" value="P:DNA repair"/>
    <property type="evidence" value="ECO:0000304"/>
    <property type="project" value="ProtInc"/>
</dbReference>
<dbReference type="GO" id="GO:0006260">
    <property type="term" value="P:DNA replication"/>
    <property type="evidence" value="ECO:0000303"/>
    <property type="project" value="UniProtKB"/>
</dbReference>
<dbReference type="GO" id="GO:1904161">
    <property type="term" value="P:DNA synthesis involved in UV-damage excision repair"/>
    <property type="evidence" value="ECO:0007669"/>
    <property type="project" value="Ensembl"/>
</dbReference>
<dbReference type="GO" id="GO:0045184">
    <property type="term" value="P:establishment of protein localization"/>
    <property type="evidence" value="ECO:0007669"/>
    <property type="project" value="Ensembl"/>
</dbReference>
<dbReference type="GO" id="GO:0006091">
    <property type="term" value="P:generation of precursor metabolites and energy"/>
    <property type="evidence" value="ECO:0007669"/>
    <property type="project" value="Ensembl"/>
</dbReference>
<dbReference type="GO" id="GO:0003007">
    <property type="term" value="P:heart morphogenesis"/>
    <property type="evidence" value="ECO:0007669"/>
    <property type="project" value="Ensembl"/>
</dbReference>
<dbReference type="GO" id="GO:0003015">
    <property type="term" value="P:heart process"/>
    <property type="evidence" value="ECO:0007669"/>
    <property type="project" value="Ensembl"/>
</dbReference>
<dbReference type="GO" id="GO:0097281">
    <property type="term" value="P:immune complex formation"/>
    <property type="evidence" value="ECO:0007669"/>
    <property type="project" value="Ensembl"/>
</dbReference>
<dbReference type="GO" id="GO:0002383">
    <property type="term" value="P:immune response in brain or nervous system"/>
    <property type="evidence" value="ECO:0007669"/>
    <property type="project" value="Ensembl"/>
</dbReference>
<dbReference type="GO" id="GO:0002437">
    <property type="term" value="P:inflammatory response to antigenic stimulus"/>
    <property type="evidence" value="ECO:0007669"/>
    <property type="project" value="Ensembl"/>
</dbReference>
<dbReference type="GO" id="GO:0001822">
    <property type="term" value="P:kidney development"/>
    <property type="evidence" value="ECO:0007669"/>
    <property type="project" value="Ensembl"/>
</dbReference>
<dbReference type="GO" id="GO:0002320">
    <property type="term" value="P:lymphoid progenitor cell differentiation"/>
    <property type="evidence" value="ECO:0007669"/>
    <property type="project" value="Ensembl"/>
</dbReference>
<dbReference type="GO" id="GO:0002281">
    <property type="term" value="P:macrophage activation involved in immune response"/>
    <property type="evidence" value="ECO:0007669"/>
    <property type="project" value="Ensembl"/>
</dbReference>
<dbReference type="GO" id="GO:0006298">
    <property type="term" value="P:mismatch repair"/>
    <property type="evidence" value="ECO:0000303"/>
    <property type="project" value="UniProtKB"/>
</dbReference>
<dbReference type="GO" id="GO:0031571">
    <property type="term" value="P:mitotic G1 DNA damage checkpoint signaling"/>
    <property type="evidence" value="ECO:0007669"/>
    <property type="project" value="Ensembl"/>
</dbReference>
<dbReference type="GO" id="GO:0160049">
    <property type="term" value="P:negative regulation of cGAS/STING signaling pathway"/>
    <property type="evidence" value="ECO:0000314"/>
    <property type="project" value="UniProt"/>
</dbReference>
<dbReference type="GO" id="GO:0045824">
    <property type="term" value="P:negative regulation of innate immune response"/>
    <property type="evidence" value="ECO:0000314"/>
    <property type="project" value="UniProtKB"/>
</dbReference>
<dbReference type="GO" id="GO:0060339">
    <property type="term" value="P:negative regulation of type I interferon-mediated signaling pathway"/>
    <property type="evidence" value="ECO:0007669"/>
    <property type="project" value="Ensembl"/>
</dbReference>
<dbReference type="GO" id="GO:0050821">
    <property type="term" value="P:protein stabilization"/>
    <property type="evidence" value="ECO:0007669"/>
    <property type="project" value="Ensembl"/>
</dbReference>
<dbReference type="GO" id="GO:0043457">
    <property type="term" value="P:regulation of cellular respiration"/>
    <property type="evidence" value="ECO:0007669"/>
    <property type="project" value="Ensembl"/>
</dbReference>
<dbReference type="GO" id="GO:0019217">
    <property type="term" value="P:regulation of fatty acid metabolic process"/>
    <property type="evidence" value="ECO:0007669"/>
    <property type="project" value="Ensembl"/>
</dbReference>
<dbReference type="GO" id="GO:0006110">
    <property type="term" value="P:regulation of glycolytic process"/>
    <property type="evidence" value="ECO:0007669"/>
    <property type="project" value="Ensembl"/>
</dbReference>
<dbReference type="GO" id="GO:0002637">
    <property type="term" value="P:regulation of immunoglobulin production"/>
    <property type="evidence" value="ECO:0007669"/>
    <property type="project" value="Ensembl"/>
</dbReference>
<dbReference type="GO" id="GO:0050727">
    <property type="term" value="P:regulation of inflammatory response"/>
    <property type="evidence" value="ECO:0007669"/>
    <property type="project" value="Ensembl"/>
</dbReference>
<dbReference type="GO" id="GO:0046890">
    <property type="term" value="P:regulation of lipid biosynthetic process"/>
    <property type="evidence" value="ECO:0007669"/>
    <property type="project" value="Ensembl"/>
</dbReference>
<dbReference type="GO" id="GO:1905671">
    <property type="term" value="P:regulation of lysosome organization"/>
    <property type="evidence" value="ECO:0007669"/>
    <property type="project" value="Ensembl"/>
</dbReference>
<dbReference type="GO" id="GO:0061635">
    <property type="term" value="P:regulation of protein complex stability"/>
    <property type="evidence" value="ECO:0007669"/>
    <property type="project" value="Ensembl"/>
</dbReference>
<dbReference type="GO" id="GO:0050863">
    <property type="term" value="P:regulation of T cell activation"/>
    <property type="evidence" value="ECO:0007669"/>
    <property type="project" value="Ensembl"/>
</dbReference>
<dbReference type="GO" id="GO:0032680">
    <property type="term" value="P:regulation of tumor necrosis factor production"/>
    <property type="evidence" value="ECO:0007669"/>
    <property type="project" value="Ensembl"/>
</dbReference>
<dbReference type="GO" id="GO:0032479">
    <property type="term" value="P:regulation of type I interferon production"/>
    <property type="evidence" value="ECO:0007669"/>
    <property type="project" value="Ensembl"/>
</dbReference>
<dbReference type="GO" id="GO:0032197">
    <property type="term" value="P:retrotransposition"/>
    <property type="evidence" value="ECO:0007669"/>
    <property type="project" value="Ensembl"/>
</dbReference>
<dbReference type="GO" id="GO:0002457">
    <property type="term" value="P:T cell antigen processing and presentation"/>
    <property type="evidence" value="ECO:0007669"/>
    <property type="project" value="Ensembl"/>
</dbReference>
<dbReference type="GO" id="GO:0060337">
    <property type="term" value="P:type I interferon-mediated signaling pathway"/>
    <property type="evidence" value="ECO:0007669"/>
    <property type="project" value="Ensembl"/>
</dbReference>
<dbReference type="FunFam" id="3.30.420.10:FF:000046">
    <property type="entry name" value="Three prime repair exonuclease 1"/>
    <property type="match status" value="1"/>
</dbReference>
<dbReference type="Gene3D" id="3.30.420.10">
    <property type="entry name" value="Ribonuclease H-like superfamily/Ribonuclease H"/>
    <property type="match status" value="1"/>
</dbReference>
<dbReference type="InterPro" id="IPR013520">
    <property type="entry name" value="Exonuclease_RNaseT/DNA_pol3"/>
</dbReference>
<dbReference type="InterPro" id="IPR012337">
    <property type="entry name" value="RNaseH-like_sf"/>
</dbReference>
<dbReference type="InterPro" id="IPR036397">
    <property type="entry name" value="RNaseH_sf"/>
</dbReference>
<dbReference type="InterPro" id="IPR040393">
    <property type="entry name" value="TREX1/2"/>
</dbReference>
<dbReference type="PANTHER" id="PTHR13058">
    <property type="entry name" value="THREE PRIME REPAIR EXONUCLEASE 1, 2"/>
    <property type="match status" value="1"/>
</dbReference>
<dbReference type="PANTHER" id="PTHR13058:SF27">
    <property type="entry name" value="THREE-PRIME REPAIR EXONUCLEASE 1"/>
    <property type="match status" value="1"/>
</dbReference>
<dbReference type="SMART" id="SM00479">
    <property type="entry name" value="EXOIII"/>
    <property type="match status" value="1"/>
</dbReference>
<dbReference type="SUPFAM" id="SSF53098">
    <property type="entry name" value="Ribonuclease H-like"/>
    <property type="match status" value="1"/>
</dbReference>
<evidence type="ECO:0000250" key="1">
    <source>
        <dbReference type="UniProtKB" id="Q91XB0"/>
    </source>
</evidence>
<evidence type="ECO:0000256" key="2">
    <source>
        <dbReference type="SAM" id="MobiDB-lite"/>
    </source>
</evidence>
<evidence type="ECO:0000269" key="3">
    <source>
    </source>
</evidence>
<evidence type="ECO:0000269" key="4">
    <source>
    </source>
</evidence>
<evidence type="ECO:0000269" key="5">
    <source>
    </source>
</evidence>
<evidence type="ECO:0000269" key="6">
    <source>
    </source>
</evidence>
<evidence type="ECO:0000269" key="7">
    <source>
    </source>
</evidence>
<evidence type="ECO:0000269" key="8">
    <source>
    </source>
</evidence>
<evidence type="ECO:0000269" key="9">
    <source>
    </source>
</evidence>
<evidence type="ECO:0000269" key="10">
    <source>
    </source>
</evidence>
<evidence type="ECO:0000269" key="11">
    <source>
    </source>
</evidence>
<evidence type="ECO:0000269" key="12">
    <source>
    </source>
</evidence>
<evidence type="ECO:0000269" key="13">
    <source>
    </source>
</evidence>
<evidence type="ECO:0000269" key="14">
    <source>
    </source>
</evidence>
<evidence type="ECO:0000269" key="15">
    <source>
    </source>
</evidence>
<evidence type="ECO:0000269" key="16">
    <source>
    </source>
</evidence>
<evidence type="ECO:0000269" key="17">
    <source>
    </source>
</evidence>
<evidence type="ECO:0000269" key="18">
    <source>
    </source>
</evidence>
<evidence type="ECO:0000269" key="19">
    <source>
    </source>
</evidence>
<evidence type="ECO:0000303" key="20">
    <source>
    </source>
</evidence>
<evidence type="ECO:0000303" key="21">
    <source>
    </source>
</evidence>
<evidence type="ECO:0000303" key="22">
    <source>
    </source>
</evidence>
<evidence type="ECO:0000305" key="23"/>
<evidence type="ECO:0000312" key="24">
    <source>
        <dbReference type="HGNC" id="HGNC:12269"/>
    </source>
</evidence>
<evidence type="ECO:0007744" key="25">
    <source>
    </source>
</evidence>
<evidence type="ECO:0007744" key="26">
    <source>
    </source>
</evidence>
<evidence type="ECO:0007744" key="27">
    <source>
    </source>
</evidence>
<evidence type="ECO:0007829" key="28">
    <source>
        <dbReference type="PDB" id="7TQO"/>
    </source>
</evidence>
<evidence type="ECO:0007829" key="29">
    <source>
        <dbReference type="PDB" id="7TQQ"/>
    </source>
</evidence>
<keyword id="KW-0002">3D-structure</keyword>
<keyword id="KW-0948">Aicardi-Goutieres syndrome</keyword>
<keyword id="KW-0025">Alternative splicing</keyword>
<keyword id="KW-0963">Cytoplasm</keyword>
<keyword id="KW-0225">Disease variant</keyword>
<keyword id="KW-0256">Endoplasmic reticulum</keyword>
<keyword id="KW-0269">Exonuclease</keyword>
<keyword id="KW-0378">Hydrolase</keyword>
<keyword id="KW-0460">Magnesium</keyword>
<keyword id="KW-0472">Membrane</keyword>
<keyword id="KW-0479">Metal-binding</keyword>
<keyword id="KW-0523">Neurodegeneration</keyword>
<keyword id="KW-0540">Nuclease</keyword>
<keyword id="KW-0539">Nucleus</keyword>
<keyword id="KW-0597">Phosphoprotein</keyword>
<keyword id="KW-1267">Proteomics identification</keyword>
<keyword id="KW-1185">Reference proteome</keyword>
<keyword id="KW-0772">Systemic lupus erythematosus</keyword>
<keyword id="KW-0832">Ubl conjugation</keyword>
<reference key="1">
    <citation type="journal article" date="1999" name="EMBO J.">
        <title>A human DNA editing enzyme homologous to the Escherichia coli DnaQ/MutD protein.</title>
        <authorList>
            <person name="Hoess M."/>
            <person name="Robins P."/>
            <person name="Naven T.J.P."/>
            <person name="Pappin D.J.C."/>
            <person name="Sgouros J."/>
            <person name="Lindahl T."/>
        </authorList>
    </citation>
    <scope>NUCLEOTIDE SEQUENCE [MRNA] (ISOFORM 2)</scope>
    <scope>FUNCTION</scope>
    <scope>TISSUE SPECIFICITY</scope>
    <scope>SUBCELLULAR LOCATION</scope>
</reference>
<reference key="2">
    <citation type="journal article" date="1999" name="J. Biol. Chem.">
        <title>Identification and expression of the TREX1 and TREX2 cDNA sequences encoding mammalian 3'--&gt;5' exonucleases.</title>
        <authorList>
            <person name="Mazur D.J."/>
            <person name="Perrino F.W."/>
        </authorList>
    </citation>
    <scope>NUCLEOTIDE SEQUENCE [MRNA] (ISOFORM 1)</scope>
    <scope>FUNCTION</scope>
    <scope>CATALYTIC ACTIVITY</scope>
</reference>
<reference key="3">
    <citation type="journal article" date="2001" name="J. Biol. Chem.">
        <title>Structure and expression of the TREX1 and TREX2 3'--&gt;5' exonuclease genes.</title>
        <authorList>
            <person name="Mazur D.J."/>
            <person name="Perrino F.W."/>
        </authorList>
    </citation>
    <scope>NUCLEOTIDE SEQUENCE [MRNA] (ISOFORMS 1 AND 3)</scope>
    <scope>TISSUE SPECIFICITY</scope>
</reference>
<reference key="4">
    <citation type="journal article" date="2004" name="Nat. Genet.">
        <title>Complete sequencing and characterization of 21,243 full-length human cDNAs.</title>
        <authorList>
            <person name="Ota T."/>
            <person name="Suzuki Y."/>
            <person name="Nishikawa T."/>
            <person name="Otsuki T."/>
            <person name="Sugiyama T."/>
            <person name="Irie R."/>
            <person name="Wakamatsu A."/>
            <person name="Hayashi K."/>
            <person name="Sato H."/>
            <person name="Nagai K."/>
            <person name="Kimura K."/>
            <person name="Makita H."/>
            <person name="Sekine M."/>
            <person name="Obayashi M."/>
            <person name="Nishi T."/>
            <person name="Shibahara T."/>
            <person name="Tanaka T."/>
            <person name="Ishii S."/>
            <person name="Yamamoto J."/>
            <person name="Saito K."/>
            <person name="Kawai Y."/>
            <person name="Isono Y."/>
            <person name="Nakamura Y."/>
            <person name="Nagahari K."/>
            <person name="Murakami K."/>
            <person name="Yasuda T."/>
            <person name="Iwayanagi T."/>
            <person name="Wagatsuma M."/>
            <person name="Shiratori A."/>
            <person name="Sudo H."/>
            <person name="Hosoiri T."/>
            <person name="Kaku Y."/>
            <person name="Kodaira H."/>
            <person name="Kondo H."/>
            <person name="Sugawara M."/>
            <person name="Takahashi M."/>
            <person name="Kanda K."/>
            <person name="Yokoi T."/>
            <person name="Furuya T."/>
            <person name="Kikkawa E."/>
            <person name="Omura Y."/>
            <person name="Abe K."/>
            <person name="Kamihara K."/>
            <person name="Katsuta N."/>
            <person name="Sato K."/>
            <person name="Tanikawa M."/>
            <person name="Yamazaki M."/>
            <person name="Ninomiya K."/>
            <person name="Ishibashi T."/>
            <person name="Yamashita H."/>
            <person name="Murakawa K."/>
            <person name="Fujimori K."/>
            <person name="Tanai H."/>
            <person name="Kimata M."/>
            <person name="Watanabe M."/>
            <person name="Hiraoka S."/>
            <person name="Chiba Y."/>
            <person name="Ishida S."/>
            <person name="Ono Y."/>
            <person name="Takiguchi S."/>
            <person name="Watanabe S."/>
            <person name="Yosida M."/>
            <person name="Hotuta T."/>
            <person name="Kusano J."/>
            <person name="Kanehori K."/>
            <person name="Takahashi-Fujii A."/>
            <person name="Hara H."/>
            <person name="Tanase T.-O."/>
            <person name="Nomura Y."/>
            <person name="Togiya S."/>
            <person name="Komai F."/>
            <person name="Hara R."/>
            <person name="Takeuchi K."/>
            <person name="Arita M."/>
            <person name="Imose N."/>
            <person name="Musashino K."/>
            <person name="Yuuki H."/>
            <person name="Oshima A."/>
            <person name="Sasaki N."/>
            <person name="Aotsuka S."/>
            <person name="Yoshikawa Y."/>
            <person name="Matsunawa H."/>
            <person name="Ichihara T."/>
            <person name="Shiohata N."/>
            <person name="Sano S."/>
            <person name="Moriya S."/>
            <person name="Momiyama H."/>
            <person name="Satoh N."/>
            <person name="Takami S."/>
            <person name="Terashima Y."/>
            <person name="Suzuki O."/>
            <person name="Nakagawa S."/>
            <person name="Senoh A."/>
            <person name="Mizoguchi H."/>
            <person name="Goto Y."/>
            <person name="Shimizu F."/>
            <person name="Wakebe H."/>
            <person name="Hishigaki H."/>
            <person name="Watanabe T."/>
            <person name="Sugiyama A."/>
            <person name="Takemoto M."/>
            <person name="Kawakami B."/>
            <person name="Yamazaki M."/>
            <person name="Watanabe K."/>
            <person name="Kumagai A."/>
            <person name="Itakura S."/>
            <person name="Fukuzumi Y."/>
            <person name="Fujimori Y."/>
            <person name="Komiyama M."/>
            <person name="Tashiro H."/>
            <person name="Tanigami A."/>
            <person name="Fujiwara T."/>
            <person name="Ono T."/>
            <person name="Yamada K."/>
            <person name="Fujii Y."/>
            <person name="Ozaki K."/>
            <person name="Hirao M."/>
            <person name="Ohmori Y."/>
            <person name="Kawabata A."/>
            <person name="Hikiji T."/>
            <person name="Kobatake N."/>
            <person name="Inagaki H."/>
            <person name="Ikema Y."/>
            <person name="Okamoto S."/>
            <person name="Okitani R."/>
            <person name="Kawakami T."/>
            <person name="Noguchi S."/>
            <person name="Itoh T."/>
            <person name="Shigeta K."/>
            <person name="Senba T."/>
            <person name="Matsumura K."/>
            <person name="Nakajima Y."/>
            <person name="Mizuno T."/>
            <person name="Morinaga M."/>
            <person name="Sasaki M."/>
            <person name="Togashi T."/>
            <person name="Oyama M."/>
            <person name="Hata H."/>
            <person name="Watanabe M."/>
            <person name="Komatsu T."/>
            <person name="Mizushima-Sugano J."/>
            <person name="Satoh T."/>
            <person name="Shirai Y."/>
            <person name="Takahashi Y."/>
            <person name="Nakagawa K."/>
            <person name="Okumura K."/>
            <person name="Nagase T."/>
            <person name="Nomura N."/>
            <person name="Kikuchi H."/>
            <person name="Masuho Y."/>
            <person name="Yamashita R."/>
            <person name="Nakai K."/>
            <person name="Yada T."/>
            <person name="Nakamura Y."/>
            <person name="Ohara O."/>
            <person name="Isogai T."/>
            <person name="Sugano S."/>
        </authorList>
    </citation>
    <scope>NUCLEOTIDE SEQUENCE [LARGE SCALE MRNA] (ISOFORM 1)</scope>
    <source>
        <tissue>Thymus</tissue>
    </source>
</reference>
<reference key="5">
    <citation type="journal article" date="2007" name="BMC Genomics">
        <title>The full-ORF clone resource of the German cDNA consortium.</title>
        <authorList>
            <person name="Bechtel S."/>
            <person name="Rosenfelder H."/>
            <person name="Duda A."/>
            <person name="Schmidt C.P."/>
            <person name="Ernst U."/>
            <person name="Wellenreuther R."/>
            <person name="Mehrle A."/>
            <person name="Schuster C."/>
            <person name="Bahr A."/>
            <person name="Bloecker H."/>
            <person name="Heubner D."/>
            <person name="Hoerlein A."/>
            <person name="Michel G."/>
            <person name="Wedler H."/>
            <person name="Koehrer K."/>
            <person name="Ottenwaelder B."/>
            <person name="Poustka A."/>
            <person name="Wiemann S."/>
            <person name="Schupp I."/>
        </authorList>
    </citation>
    <scope>NUCLEOTIDE SEQUENCE [LARGE SCALE MRNA] (ISOFORM 1)</scope>
    <source>
        <tissue>Testis</tissue>
    </source>
</reference>
<reference key="6">
    <citation type="submission" date="2002-02" db="EMBL/GenBank/DDBJ databases">
        <authorList>
            <consortium name="NIEHS SNPs program"/>
        </authorList>
    </citation>
    <scope>NUCLEOTIDE SEQUENCE [GENOMIC DNA]</scope>
</reference>
<reference key="7">
    <citation type="journal article" date="2006" name="Nature">
        <title>The DNA sequence, annotation and analysis of human chromosome 3.</title>
        <authorList>
            <person name="Muzny D.M."/>
            <person name="Scherer S.E."/>
            <person name="Kaul R."/>
            <person name="Wang J."/>
            <person name="Yu J."/>
            <person name="Sudbrak R."/>
            <person name="Buhay C.J."/>
            <person name="Chen R."/>
            <person name="Cree A."/>
            <person name="Ding Y."/>
            <person name="Dugan-Rocha S."/>
            <person name="Gill R."/>
            <person name="Gunaratne P."/>
            <person name="Harris R.A."/>
            <person name="Hawes A.C."/>
            <person name="Hernandez J."/>
            <person name="Hodgson A.V."/>
            <person name="Hume J."/>
            <person name="Jackson A."/>
            <person name="Khan Z.M."/>
            <person name="Kovar-Smith C."/>
            <person name="Lewis L.R."/>
            <person name="Lozado R.J."/>
            <person name="Metzker M.L."/>
            <person name="Milosavljevic A."/>
            <person name="Miner G.R."/>
            <person name="Morgan M.B."/>
            <person name="Nazareth L.V."/>
            <person name="Scott G."/>
            <person name="Sodergren E."/>
            <person name="Song X.-Z."/>
            <person name="Steffen D."/>
            <person name="Wei S."/>
            <person name="Wheeler D.A."/>
            <person name="Wright M.W."/>
            <person name="Worley K.C."/>
            <person name="Yuan Y."/>
            <person name="Zhang Z."/>
            <person name="Adams C.Q."/>
            <person name="Ansari-Lari M.A."/>
            <person name="Ayele M."/>
            <person name="Brown M.J."/>
            <person name="Chen G."/>
            <person name="Chen Z."/>
            <person name="Clendenning J."/>
            <person name="Clerc-Blankenburg K.P."/>
            <person name="Chen R."/>
            <person name="Chen Z."/>
            <person name="Davis C."/>
            <person name="Delgado O."/>
            <person name="Dinh H.H."/>
            <person name="Dong W."/>
            <person name="Draper H."/>
            <person name="Ernst S."/>
            <person name="Fu G."/>
            <person name="Gonzalez-Garay M.L."/>
            <person name="Garcia D.K."/>
            <person name="Gillett W."/>
            <person name="Gu J."/>
            <person name="Hao B."/>
            <person name="Haugen E."/>
            <person name="Havlak P."/>
            <person name="He X."/>
            <person name="Hennig S."/>
            <person name="Hu S."/>
            <person name="Huang W."/>
            <person name="Jackson L.R."/>
            <person name="Jacob L.S."/>
            <person name="Kelly S.H."/>
            <person name="Kube M."/>
            <person name="Levy R."/>
            <person name="Li Z."/>
            <person name="Liu B."/>
            <person name="Liu J."/>
            <person name="Liu W."/>
            <person name="Lu J."/>
            <person name="Maheshwari M."/>
            <person name="Nguyen B.-V."/>
            <person name="Okwuonu G.O."/>
            <person name="Palmeiri A."/>
            <person name="Pasternak S."/>
            <person name="Perez L.M."/>
            <person name="Phelps K.A."/>
            <person name="Plopper F.J."/>
            <person name="Qiang B."/>
            <person name="Raymond C."/>
            <person name="Rodriguez R."/>
            <person name="Saenphimmachak C."/>
            <person name="Santibanez J."/>
            <person name="Shen H."/>
            <person name="Shen Y."/>
            <person name="Subramanian S."/>
            <person name="Tabor P.E."/>
            <person name="Verduzco D."/>
            <person name="Waldron L."/>
            <person name="Wang J."/>
            <person name="Wang J."/>
            <person name="Wang Q."/>
            <person name="Williams G.A."/>
            <person name="Wong G.K.-S."/>
            <person name="Yao Z."/>
            <person name="Zhang J."/>
            <person name="Zhang X."/>
            <person name="Zhao G."/>
            <person name="Zhou J."/>
            <person name="Zhou Y."/>
            <person name="Nelson D."/>
            <person name="Lehrach H."/>
            <person name="Reinhardt R."/>
            <person name="Naylor S.L."/>
            <person name="Yang H."/>
            <person name="Olson M."/>
            <person name="Weinstock G."/>
            <person name="Gibbs R.A."/>
        </authorList>
    </citation>
    <scope>NUCLEOTIDE SEQUENCE [LARGE SCALE GENOMIC DNA]</scope>
</reference>
<reference key="8">
    <citation type="journal article" date="2004" name="Genome Res.">
        <title>The status, quality, and expansion of the NIH full-length cDNA project: the Mammalian Gene Collection (MGC).</title>
        <authorList>
            <consortium name="The MGC Project Team"/>
        </authorList>
    </citation>
    <scope>NUCLEOTIDE SEQUENCE [LARGE SCALE MRNA] (ISOFORM 1)</scope>
    <source>
        <tissue>Eye</tissue>
    </source>
</reference>
<reference key="9">
    <citation type="journal article" date="2006" name="Mol. Cell">
        <title>The exonuclease TREX1 is in the SET complex and acts in concert with NM23-H1 to degrade DNA during granzyme A-mediated cell death.</title>
        <authorList>
            <person name="Chowdhury D."/>
            <person name="Beresford P.J."/>
            <person name="Zhu P."/>
            <person name="Zhang D."/>
            <person name="Sung J.S."/>
            <person name="Demple B."/>
            <person name="Perrino F.W."/>
            <person name="Lieberman J."/>
        </authorList>
    </citation>
    <scope>FUNCTION IN CELL DEATH</scope>
    <scope>IDENTIFICATION IN THE SET COMPLEX</scope>
    <scope>INTERACTION WITH NME1 AND SET</scope>
    <scope>SUBCELLULAR LOCATION</scope>
</reference>
<reference key="10">
    <citation type="journal article" date="2007" name="Cell">
        <title>Trex1 exonuclease degrades ssDNA to prevent chronic checkpoint activation and autoimmune disease.</title>
        <authorList>
            <person name="Yang Y.G."/>
            <person name="Lindahl T."/>
            <person name="Barnes D.E."/>
        </authorList>
    </citation>
    <scope>FUNCTION IN CELL CYCLE REGULATION</scope>
    <scope>CHARACTERIZATION OF VARIANT AGS1 HIS-114</scope>
</reference>
<reference key="11">
    <citation type="journal article" date="2007" name="J. Biol. Chem.">
        <title>The crystal structure of TREX1 explains the 3' nucleotide specificity and reveals a polyproline II helix for protein partnering.</title>
        <authorList>
            <person name="de Silva U."/>
            <person name="Choudhury S."/>
            <person name="Bailey S.L."/>
            <person name="Harvey S."/>
            <person name="Perrino F.W."/>
            <person name="Hollis T."/>
        </authorList>
    </citation>
    <scope>FUNCTION</scope>
    <scope>CHARACTERIZATION OF VARIANTS AGS1 HIS-114; ASP-200 INS AND ASP-201</scope>
</reference>
<reference key="12">
    <citation type="journal article" date="2008" name="Proc. Natl. Acad. Sci. U.S.A.">
        <title>A quantitative atlas of mitotic phosphorylation.</title>
        <authorList>
            <person name="Dephoure N."/>
            <person name="Zhou C."/>
            <person name="Villen J."/>
            <person name="Beausoleil S.A."/>
            <person name="Bakalarski C.E."/>
            <person name="Elledge S.J."/>
            <person name="Gygi S.P."/>
        </authorList>
    </citation>
    <scope>PHOSPHORYLATION [LARGE SCALE ANALYSIS] AT SER-78 AND SER-261</scope>
    <scope>IDENTIFICATION BY MASS SPECTROMETRY [LARGE SCALE ANALYSIS]</scope>
    <source>
        <tissue>Cervix carcinoma</tissue>
    </source>
</reference>
<reference key="13">
    <citation type="journal article" date="2013" name="Immunity">
        <title>Oxidative damage of DNA confers resistance to cytosolic nuclease TREX1 degradation and potentiates STING-dependent immune sensing.</title>
        <authorList>
            <person name="Gehrke N."/>
            <person name="Mertens C."/>
            <person name="Zillinger T."/>
            <person name="Wenzel J."/>
            <person name="Bald T."/>
            <person name="Zahn S."/>
            <person name="Tueting T."/>
            <person name="Hartmann G."/>
            <person name="Barchet W."/>
        </authorList>
    </citation>
    <scope>FUNCTION IN OXIDIZED DNA DEGRADATION</scope>
    <scope>POTENTIAL ROLE IN SLE SKIN LESIONS</scope>
</reference>
<reference key="14">
    <citation type="journal article" date="2013" name="J. Biol. Chem.">
        <title>The TREX1 C-terminal region controls cellular localization through ubiquitination.</title>
        <authorList>
            <person name="Orebaugh C.D."/>
            <person name="Fye J.M."/>
            <person name="Harvey S."/>
            <person name="Hollis T."/>
            <person name="Wilkinson J.C."/>
            <person name="Perrino F.W."/>
        </authorList>
    </citation>
    <scope>INTERACTION WITH UBQLN1</scope>
    <scope>UBIQUITINATION</scope>
    <scope>CHARACTERIZATION OF VARIANTS AGS1 ALA-122; LYS-198; ASN-200 AND PRO-303</scope>
    <scope>CHARACTERIZATION OF VARIANTS SLE LEU-290 AND CYS-305</scope>
    <scope>MUTAGENESIS OF LYS-30; LYS-66; LYS-75; LYS-160; LYS-175; LYS-242; LYS-271 AND LYS-277</scope>
</reference>
<reference key="15">
    <citation type="journal article" date="2013" name="J. Proteome Res.">
        <title>Toward a comprehensive characterization of a human cancer cell phosphoproteome.</title>
        <authorList>
            <person name="Zhou H."/>
            <person name="Di Palma S."/>
            <person name="Preisinger C."/>
            <person name="Peng M."/>
            <person name="Polat A.N."/>
            <person name="Heck A.J."/>
            <person name="Mohammed S."/>
        </authorList>
    </citation>
    <scope>PHOSPHORYLATION [LARGE SCALE ANALYSIS] AT SER-261</scope>
    <scope>IDENTIFICATION BY MASS SPECTROMETRY [LARGE SCALE ANALYSIS]</scope>
    <source>
        <tissue>Cervix carcinoma</tissue>
    </source>
</reference>
<reference key="16">
    <citation type="journal article" date="2014" name="J. Proteomics">
        <title>An enzyme assisted RP-RPLC approach for in-depth analysis of human liver phosphoproteome.</title>
        <authorList>
            <person name="Bian Y."/>
            <person name="Song C."/>
            <person name="Cheng K."/>
            <person name="Dong M."/>
            <person name="Wang F."/>
            <person name="Huang J."/>
            <person name="Sun D."/>
            <person name="Wang L."/>
            <person name="Ye M."/>
            <person name="Zou H."/>
        </authorList>
    </citation>
    <scope>PHOSPHORYLATION [LARGE SCALE ANALYSIS] AT SER-167</scope>
    <scope>IDENTIFICATION BY MASS SPECTROMETRY [LARGE SCALE ANALYSIS]</scope>
    <source>
        <tissue>Liver</tissue>
    </source>
</reference>
<reference key="17">
    <citation type="journal article" date="2015" name="Proteomics">
        <title>N-terminome analysis of the human mitochondrial proteome.</title>
        <authorList>
            <person name="Vaca Jacome A.S."/>
            <person name="Rabilloud T."/>
            <person name="Schaeffer-Reiss C."/>
            <person name="Rompais M."/>
            <person name="Ayoub D."/>
            <person name="Lane L."/>
            <person name="Bairoch A."/>
            <person name="Van Dorsselaer A."/>
            <person name="Carapito C."/>
        </authorList>
    </citation>
    <scope>IDENTIFICATION BY MASS SPECTROMETRY [LARGE SCALE ANALYSIS]</scope>
</reference>
<reference key="18">
    <citation type="journal article" date="2021" name="Mol. Cell">
        <title>ER-directed TREX1 limits cGAS activation at micronuclei.</title>
        <authorList>
            <person name="Mohr L."/>
            <person name="Toufektchan E."/>
            <person name="von Morgen P."/>
            <person name="Chu K."/>
            <person name="Kapoor A."/>
            <person name="Maciejowski J."/>
        </authorList>
    </citation>
    <scope>FUNCTION</scope>
    <scope>SUBCELLULAR LOCATION</scope>
    <scope>CHARACTERIZATION OF VARIANT AGS1 ASN-18</scope>
</reference>
<reference key="19">
    <citation type="journal article" date="2006" name="Nat. Genet.">
        <title>Mutations in the gene encoding the 3'-5' DNA exonuclease TREX1 cause Aicardi-Goutieres syndrome at the AGS1 locus.</title>
        <authorList>
            <person name="Crow Y.J."/>
            <person name="Hayward B.E."/>
            <person name="Parmar R."/>
            <person name="Robins P."/>
            <person name="Leitch A."/>
            <person name="Ali M."/>
            <person name="Black D.N."/>
            <person name="van Bokhoven H."/>
            <person name="Brunner H.G."/>
            <person name="Hamel B.C.J."/>
            <person name="Corry P.C."/>
            <person name="Cowan F.M."/>
            <person name="Frints S.G."/>
            <person name="Klepper J."/>
            <person name="Livingston J.H."/>
            <person name="Lynch S.A."/>
            <person name="Massey R.F."/>
            <person name="Meritet J.F."/>
            <person name="Michaud J.L."/>
            <person name="Ponsot G."/>
            <person name="Voit T."/>
            <person name="Lebon P."/>
            <person name="Bonthron D.T."/>
            <person name="Jackson A.P."/>
            <person name="Barnes D.E."/>
            <person name="Lindahl T."/>
        </authorList>
    </citation>
    <scope>VARIANTS AGS1 HIS-114; ASP-200 INS AND ASP-201</scope>
</reference>
<reference key="20">
    <citation type="journal article" date="2007" name="Am. J. Hum. Genet.">
        <title>Heterozygous mutations in TREX1 cause familial chilblain lupus and dominant Aicardi-Goutieres syndrome.</title>
        <authorList>
            <person name="Rice G."/>
            <person name="Newman W.G."/>
            <person name="Dean J."/>
            <person name="Patrick T."/>
            <person name="Parmar R."/>
            <person name="Flintoff K."/>
            <person name="Robins P."/>
            <person name="Harvey S."/>
            <person name="Hollis T."/>
            <person name="O'Hara A."/>
            <person name="Herrick A.L."/>
            <person name="Bowden A.P."/>
            <person name="Perrino F.W."/>
            <person name="Lindahl T."/>
            <person name="Barnes D.E."/>
            <person name="Crow Y.J."/>
        </authorList>
    </citation>
    <scope>INVOLVEMENT IN CHBL1</scope>
    <scope>VARIANT AGS1 ASN-200</scope>
    <scope>CHARACTERIZATION OF VARIANT AGS1 ASN-200</scope>
</reference>
<reference key="21">
    <citation type="journal article" date="2007" name="Am. J. Hum. Genet.">
        <title>Clinical and molecular phenotype of Aicardi-Goutieres syndrome.</title>
        <authorList>
            <person name="Rice G."/>
            <person name="Patrick T."/>
            <person name="Parmar R."/>
            <person name="Taylor C.F."/>
            <person name="Aeby A."/>
            <person name="Aicardi J."/>
            <person name="Artuch R."/>
            <person name="Montalto S.A."/>
            <person name="Bacino C.A."/>
            <person name="Barroso B."/>
            <person name="Baxter P."/>
            <person name="Benko W.S."/>
            <person name="Bergmann C."/>
            <person name="Bertini E."/>
            <person name="Biancheri R."/>
            <person name="Blair E.M."/>
            <person name="Blau N."/>
            <person name="Bonthron D.T."/>
            <person name="Briggs T."/>
            <person name="Brueton L.A."/>
            <person name="Brunner H.G."/>
            <person name="Burke C.J."/>
            <person name="Carr I.M."/>
            <person name="Carvalho D.R."/>
            <person name="Chandler K.E."/>
            <person name="Christen H.J."/>
            <person name="Corry P.C."/>
            <person name="Cowan F.M."/>
            <person name="Cox H."/>
            <person name="D'Arrigo S."/>
            <person name="Dean J."/>
            <person name="De Laet C."/>
            <person name="De Praeter C."/>
            <person name="Dery C."/>
            <person name="Ferrie C.D."/>
            <person name="Flintoff K."/>
            <person name="Frints S.G."/>
            <person name="Garcia-Cazorla A."/>
            <person name="Gener B."/>
            <person name="Goizet C."/>
            <person name="Goutieres F."/>
            <person name="Green A.J."/>
            <person name="Guet A."/>
            <person name="Hamel B.C."/>
            <person name="Hayward B.E."/>
            <person name="Heiberg A."/>
            <person name="Hennekam R.C."/>
            <person name="Husson M."/>
            <person name="Jackson A.P."/>
            <person name="Jayatunga R."/>
            <person name="Jiang Y.H."/>
            <person name="Kant S.G."/>
            <person name="Kao A."/>
            <person name="King M.D."/>
            <person name="Kingston H.M."/>
            <person name="Klepper J."/>
            <person name="van der Knaap M.S."/>
            <person name="Kornberg A.J."/>
            <person name="Kotzot D."/>
            <person name="Kratzer W."/>
            <person name="Lacombe D."/>
            <person name="Lagae L."/>
            <person name="Landrieu P.G."/>
            <person name="Lanzi G."/>
            <person name="Leitch A."/>
            <person name="Lim M.J."/>
            <person name="Livingston J.H."/>
            <person name="Lourenco C.M."/>
            <person name="Lyall E.G."/>
            <person name="Lynch S.A."/>
            <person name="Lyons M.J."/>
            <person name="Marom D."/>
            <person name="McClure J.P."/>
            <person name="McWilliam R."/>
            <person name="Melancon S.B."/>
            <person name="Mewasingh L.D."/>
            <person name="Moutard M.L."/>
            <person name="Nischal K.K."/>
            <person name="Ostergaard J.R."/>
            <person name="Prendiville J."/>
            <person name="Rasmussen M."/>
            <person name="Rogers R.C."/>
            <person name="Roland D."/>
            <person name="Rosser E.M."/>
            <person name="Rostasy K."/>
            <person name="Roubertie A."/>
            <person name="Sanchis A."/>
            <person name="Schiffmann R."/>
            <person name="Scholl-Burgi S."/>
            <person name="Seal S."/>
            <person name="Shalev S.A."/>
            <person name="Corcoles C.S."/>
            <person name="Sinha G.P."/>
            <person name="Soler D."/>
            <person name="Spiegel R."/>
            <person name="Stephenson J.B."/>
            <person name="Tacke U."/>
            <person name="Tan T.Y."/>
            <person name="Till M."/>
            <person name="Tolmie J.L."/>
            <person name="Tomlin P."/>
            <person name="Vagnarelli F."/>
            <person name="Valente E.M."/>
            <person name="Van Coster R.N."/>
            <person name="Van der Aa N."/>
            <person name="Vanderver A."/>
            <person name="Vles J.S."/>
            <person name="Voit T."/>
            <person name="Wassmer E."/>
            <person name="Weschke B."/>
            <person name="Whiteford M.L."/>
            <person name="Willemsen M.A."/>
            <person name="Zankl A."/>
            <person name="Zuberi S.M."/>
            <person name="Orcesi S."/>
            <person name="Fazzi E."/>
            <person name="Lebon P."/>
            <person name="Crow Y.J."/>
        </authorList>
    </citation>
    <scope>VARIANTS AGS1 HIS-114; ALA-122; ASN-200; ASP-201 AND PRO-303</scope>
</reference>
<reference key="22">
    <citation type="journal article" date="2007" name="J. Mol. Med.">
        <title>A mutation in TREX1 that impairs susceptibility to granzyme A-mediated cell death underlies familial chilblain lupus.</title>
        <authorList>
            <person name="Lee-Kirsch M.A."/>
            <person name="Chowdhury D."/>
            <person name="Harvey S."/>
            <person name="Gong M."/>
            <person name="Senenko L."/>
            <person name="Engel K."/>
            <person name="Pfeiffer C."/>
            <person name="Hollis T."/>
            <person name="Gahr M."/>
            <person name="Perrino F.W."/>
            <person name="Lieberman J."/>
            <person name="Hubner N."/>
        </authorList>
    </citation>
    <scope>VARIANT CHBL1 ASN-18</scope>
    <scope>CHARACTERIZATION OF VARIANT CHBL1 ASN-18</scope>
</reference>
<reference key="23">
    <citation type="journal article" date="2007" name="Nat. Genet.">
        <title>Mutations in the gene encoding the 3'-5' DNA exonuclease TREX1 are associated with systemic lupus erythematosus.</title>
        <authorList>
            <person name="Lee-Kirsch M.A."/>
            <person name="Gong M."/>
            <person name="Chowdhury D."/>
            <person name="Senenko L."/>
            <person name="Engel K."/>
            <person name="Lee Y.A."/>
            <person name="de Silva U."/>
            <person name="Bailey S.L."/>
            <person name="Witte T."/>
            <person name="Vyse T.J."/>
            <person name="Kere J."/>
            <person name="Pfeiffer C."/>
            <person name="Harvey S."/>
            <person name="Wong A."/>
            <person name="Koskenmies S."/>
            <person name="Hummel O."/>
            <person name="Rohde K."/>
            <person name="Schmidt R.E."/>
            <person name="Dominiczak A.F."/>
            <person name="Gahr M."/>
            <person name="Hollis T."/>
            <person name="Perrino F.W."/>
            <person name="Lieberman J."/>
            <person name="Huebner N."/>
        </authorList>
    </citation>
    <scope>VARIANTS SLE HIS-114; VAL-158; SER-227; SER-240; PRO-247; LEU-290; CYS-305 AND ALA-306</scope>
    <scope>VARIANT GLY-266</scope>
</reference>
<reference key="24">
    <citation type="journal article" date="2007" name="Nat. Genet.">
        <title>C-terminal truncations in human 3'-5' DNA exonuclease TREX1 cause autosomal dominant retinal vasculopathy with cerebral leukodystrophy.</title>
        <authorList>
            <person name="Richards A."/>
            <person name="van den Maagdenberg A.M.J.M."/>
            <person name="Jen J.C."/>
            <person name="Kavanagh D."/>
            <person name="Bertram P."/>
            <person name="Spitzer D."/>
            <person name="Liszewski M.K."/>
            <person name="Barilla-Labarca M.-L."/>
            <person name="Terwindt G.M."/>
            <person name="Kasai Y."/>
            <person name="McLellan M."/>
            <person name="Grand M.G."/>
            <person name="Vanmolkot K.R.J."/>
            <person name="de Vries B."/>
            <person name="Wan J."/>
            <person name="Kane M.J."/>
            <person name="Mamsa H."/>
            <person name="Schaefer R."/>
            <person name="Stam A.H."/>
            <person name="Haan J."/>
            <person name="de Jong P.T.V.M."/>
            <person name="Storimans C.W."/>
            <person name="van Schooneveld M.J."/>
            <person name="Oosterhuis J.A."/>
            <person name="Gschwendter A."/>
            <person name="Dichgans M."/>
            <person name="Kotschet K.E."/>
            <person name="Hodgkinson S."/>
            <person name="Hardy T.A."/>
            <person name="Delatycki M.B."/>
            <person name="Hajj-Ali R.A."/>
            <person name="Kothari P.H."/>
            <person name="Nelson S.F."/>
            <person name="Frants R.R."/>
            <person name="Baloh R.W."/>
            <person name="Ferrari M.D."/>
            <person name="Atkinson J.P."/>
        </authorList>
    </citation>
    <scope>INVOLVEMENT IN RVCLS</scope>
</reference>
<reference key="25">
    <citation type="journal article" date="2010" name="Am. J. Med. Genet. A">
        <title>A de novo p.Asp18Asn mutation in TREX1 in a patient with Aicardi-Goutieres syndrome.</title>
        <authorList>
            <person name="Haaxma C.A."/>
            <person name="Crow Y.J."/>
            <person name="van Steensel M.A."/>
            <person name="Lammens M.M."/>
            <person name="Rice G.I."/>
            <person name="Verbeek M.M."/>
            <person name="Willemsen M.A."/>
        </authorList>
    </citation>
    <scope>VARIANT AGS1 ASN-18</scope>
</reference>
<reference key="26">
    <citation type="journal article" date="2010" name="Arthritis Rheum.">
        <title>Expanding the phenotypic spectrum of lupus erythematosus in Aicardi-Goutieres syndrome.</title>
        <authorList>
            <person name="Ramantani G."/>
            <person name="Kohlhase J."/>
            <person name="Hertzberg C."/>
            <person name="Innes A.M."/>
            <person name="Engel K."/>
            <person name="Hunger S."/>
            <person name="Borozdin W."/>
            <person name="Mah J.K."/>
            <person name="Ungerath K."/>
            <person name="Walkenhorst H."/>
            <person name="Richardt H.H."/>
            <person name="Buckard J."/>
            <person name="Bevot A."/>
            <person name="Siegel C."/>
            <person name="von Stuelpnagel C."/>
            <person name="Ikonomidou C."/>
            <person name="Thomas K."/>
            <person name="Proud V."/>
            <person name="Niemann F."/>
            <person name="Wieczorek D."/>
            <person name="Haeusler M."/>
            <person name="Niggemann P."/>
            <person name="Baltaci V."/>
            <person name="Conrad K."/>
            <person name="Lebon P."/>
            <person name="Lee-Kirsch M.A."/>
        </authorList>
    </citation>
    <scope>VARIANTS AGS1 HIS-114; LYS-198 AND HIS-200</scope>
    <scope>VARIANT SLE HIS-200</scope>
</reference>
<protein>
    <recommendedName>
        <fullName evidence="23">Three-prime repair exonuclease 1</fullName>
        <ecNumber evidence="3 19">3.1.11.2</ecNumber>
    </recommendedName>
    <alternativeName>
        <fullName evidence="20">3'-5' exonuclease TREX1</fullName>
    </alternativeName>
    <alternativeName>
        <fullName evidence="21">Deoxyribonuclease III</fullName>
        <shortName evidence="21">DNase III</shortName>
    </alternativeName>
</protein>
<accession>Q9NSU2</accession>
<accession>B2RCN9</accession>
<accession>Q8TEU2</accession>
<accession>Q9BPW1</accession>
<accession>Q9Y4X2</accession>
<gene>
    <name evidence="20 24" type="primary">TREX1</name>
</gene>
<organism>
    <name type="scientific">Homo sapiens</name>
    <name type="common">Human</name>
    <dbReference type="NCBI Taxonomy" id="9606"/>
    <lineage>
        <taxon>Eukaryota</taxon>
        <taxon>Metazoa</taxon>
        <taxon>Chordata</taxon>
        <taxon>Craniata</taxon>
        <taxon>Vertebrata</taxon>
        <taxon>Euteleostomi</taxon>
        <taxon>Mammalia</taxon>
        <taxon>Eutheria</taxon>
        <taxon>Euarchontoglires</taxon>
        <taxon>Primates</taxon>
        <taxon>Haplorrhini</taxon>
        <taxon>Catarrhini</taxon>
        <taxon>Hominidae</taxon>
        <taxon>Homo</taxon>
    </lineage>
</organism>
<feature type="chain" id="PRO_0000109868" description="Three-prime repair exonuclease 1">
    <location>
        <begin position="1"/>
        <end position="314"/>
    </location>
</feature>
<feature type="region of interest" description="Necessary for endoplasmic reticulum localization" evidence="1">
    <location>
        <begin position="236"/>
        <end position="314"/>
    </location>
</feature>
<feature type="region of interest" description="Disordered" evidence="2">
    <location>
        <begin position="240"/>
        <end position="278"/>
    </location>
</feature>
<feature type="region of interest" description="Interaction with UBQLN1" evidence="17">
    <location>
        <begin position="243"/>
        <end position="314"/>
    </location>
</feature>
<feature type="region of interest" description="Necessary for cytoplasmic retention" evidence="1">
    <location>
        <begin position="281"/>
        <end position="314"/>
    </location>
</feature>
<feature type="compositionally biased region" description="Low complexity" evidence="2">
    <location>
        <begin position="247"/>
        <end position="260"/>
    </location>
</feature>
<feature type="active site" description="Proton donor/acceptor" evidence="1">
    <location>
        <position position="195"/>
    </location>
</feature>
<feature type="binding site" evidence="1">
    <location>
        <position position="18"/>
    </location>
    <ligand>
        <name>Mg(2+)</name>
        <dbReference type="ChEBI" id="CHEBI:18420"/>
        <label>1</label>
    </ligand>
</feature>
<feature type="binding site" evidence="1">
    <location>
        <position position="18"/>
    </location>
    <ligand>
        <name>Mg(2+)</name>
        <dbReference type="ChEBI" id="CHEBI:18420"/>
        <label>2</label>
    </ligand>
</feature>
<feature type="binding site" evidence="1">
    <location>
        <begin position="20"/>
        <end position="21"/>
    </location>
    <ligand>
        <name>substrate</name>
    </ligand>
</feature>
<feature type="binding site" evidence="1">
    <location>
        <position position="20"/>
    </location>
    <ligand>
        <name>Mg(2+)</name>
        <dbReference type="ChEBI" id="CHEBI:18420"/>
        <label>1</label>
    </ligand>
</feature>
<feature type="binding site" evidence="1">
    <location>
        <position position="129"/>
    </location>
    <ligand>
        <name>substrate</name>
    </ligand>
</feature>
<feature type="binding site" evidence="1">
    <location>
        <position position="200"/>
    </location>
    <ligand>
        <name>Mg(2+)</name>
        <dbReference type="ChEBI" id="CHEBI:18420"/>
        <label>1</label>
    </ligand>
</feature>
<feature type="binding site" evidence="1">
    <location>
        <position position="200"/>
    </location>
    <ligand>
        <name>substrate</name>
    </ligand>
</feature>
<feature type="modified residue" description="Phosphoserine" evidence="25">
    <location>
        <position position="78"/>
    </location>
</feature>
<feature type="modified residue" description="Phosphoserine" evidence="27">
    <location>
        <position position="167"/>
    </location>
</feature>
<feature type="modified residue" description="Phosphoserine" evidence="25 26">
    <location>
        <position position="261"/>
    </location>
</feature>
<feature type="splice variant" id="VSP_010445" description="In isoform 2." evidence="21">
    <location>
        <begin position="1"/>
        <end position="10"/>
    </location>
</feature>
<feature type="splice variant" id="VSP_059279" description="In isoform 1." evidence="22">
    <original>M</original>
    <variation>MGPGARRQGRIVQGRPEMCFCPPPTPLPPLRILTLGTHTPTPCSSPGSAAGTYPTM</variation>
    <location>
        <position position="1"/>
    </location>
</feature>
<feature type="sequence variant" id="VAR_037948" description="In CHBL1 and AGS1; autosomal dominant form; loss of 3'-to-5' DNA exonuclease activity; abolished ability to degrade micronuclear DNA and restrict activation of innate immune response; dbSNP:rs121908117." evidence="10 16 19">
    <original>D</original>
    <variation>N</variation>
    <location>
        <position position="18"/>
    </location>
</feature>
<feature type="sequence variant" id="VAR_028319" description="In AGS1 and SLE; primary fibroblasts from an AGS1 patient carrying H-169 show defective G1/S transition and chronic G2/M DNA damage checkpoint activation; strongly reduces activity; dbSNP:rs72556554." evidence="7 8 11 13 14 15">
    <original>R</original>
    <variation>H</variation>
    <location>
        <position position="114"/>
    </location>
</feature>
<feature type="sequence variant" id="VAR_070899" description="In AGS1; increases ubiquitination levels; no effect on exonuclease activity; dbSNP:rs79993407." evidence="13 17">
    <original>V</original>
    <variation>A</variation>
    <location>
        <position position="122"/>
    </location>
</feature>
<feature type="sequence variant" id="VAR_037949" description="In SLE; dbSNP:rs762011967." evidence="11">
    <original>A</original>
    <variation>V</variation>
    <location>
        <position position="158"/>
    </location>
</feature>
<feature type="sequence variant" id="VAR_070900" description="In AGS1; increases ubiquitination levels; no effect on exonuclease activity; dbSNP:rs1416519719." evidence="15 17">
    <original>E</original>
    <variation>K</variation>
    <location>
        <position position="198"/>
    </location>
</feature>
<feature type="sequence variant" id="VAR_028320" description="In AGS1; heterozygous compound with H-169; loss of activity." evidence="7 8">
    <original>D</original>
    <variation>DD</variation>
    <location>
        <position position="200"/>
    </location>
</feature>
<feature type="sequence variant" id="VAR_070901" description="In AGS1 and SLE." evidence="15">
    <original>D</original>
    <variation>H</variation>
    <location>
        <position position="200"/>
    </location>
</feature>
<feature type="sequence variant" id="VAR_032940" description="In AGS1; autosomal dominant form; no effect on dsDNA exonuclease activity; abolishes ssDNA exonuclease activity; dbSNP:rs78846775." evidence="9 13 17">
    <original>D</original>
    <variation>N</variation>
    <location>
        <position position="200"/>
    </location>
</feature>
<feature type="sequence variant" id="VAR_028321" description="In AGS1; reduces activity by 75%; dbSNP:rs78408272." evidence="7 8 13">
    <original>V</original>
    <variation>D</variation>
    <location>
        <position position="201"/>
    </location>
</feature>
<feature type="sequence variant" id="VAR_037950" description="In SLE; associated in cis with P-302; dbSNP:rs113107733." evidence="11">
    <original>G</original>
    <variation>S</variation>
    <location>
        <position position="227"/>
    </location>
</feature>
<feature type="sequence variant" id="VAR_037951" description="In SLE; dbSNP:rs72556555." evidence="11">
    <original>R</original>
    <variation>S</variation>
    <location>
        <position position="240"/>
    </location>
</feature>
<feature type="sequence variant" id="VAR_037952" description="In SLE; associated in cis with S-282; dbSNP:rs112741962." evidence="11">
    <original>A</original>
    <variation>P</variation>
    <location>
        <position position="247"/>
    </location>
</feature>
<feature type="sequence variant" id="VAR_037953" description="In dbSNP:rs55999987." evidence="11">
    <original>E</original>
    <variation>G</variation>
    <location>
        <position position="266"/>
    </location>
</feature>
<feature type="sequence variant" id="VAR_037954" description="In SLE; increases ubiquitination levels; no effect on exonuclease activity; dbSNP:rs148833270." evidence="11 17">
    <original>P</original>
    <variation>L</variation>
    <location>
        <position position="290"/>
    </location>
</feature>
<feature type="sequence variant" id="VAR_070902" description="In AGS1; decreases ubiquitination levels; decreases colocalization with UBQLN1; no effect on exonuclease activity; dbSNP:rs76224909." evidence="13 17">
    <original>T</original>
    <variation>P</variation>
    <location>
        <position position="303"/>
    </location>
</feature>
<feature type="sequence variant" id="VAR_037955" description="In SLE; decreases ubiquitination levels; decreases colocalization with UBQLN1; no effect on exonuclease activity; dbSNP:rs370504038." evidence="11 17">
    <original>Y</original>
    <variation>C</variation>
    <location>
        <position position="305"/>
    </location>
</feature>
<feature type="sequence variant" id="VAR_037956" description="In SLE; dbSNP:rs780022923." evidence="11">
    <original>G</original>
    <variation>A</variation>
    <location>
        <position position="306"/>
    </location>
</feature>
<feature type="mutagenesis site" description="Reduces ubiquitination." evidence="17">
    <original>K</original>
    <variation>R</variation>
    <location>
        <position position="30"/>
    </location>
</feature>
<feature type="mutagenesis site" description="No effect on ubiquitination." evidence="17">
    <original>K</original>
    <variation>R</variation>
    <location>
        <position position="66"/>
    </location>
</feature>
<feature type="mutagenesis site" description="Reduces ubiquitination." evidence="17">
    <original>K</original>
    <variation>R</variation>
    <location>
        <position position="75"/>
    </location>
</feature>
<feature type="mutagenesis site" description="Reduces ubiquitination." evidence="17">
    <original>K</original>
    <variation>R</variation>
    <location>
        <position position="160"/>
    </location>
</feature>
<feature type="mutagenesis site" description="Reduces ubiquitination." evidence="17">
    <original>K</original>
    <variation>R</variation>
    <location>
        <position position="175"/>
    </location>
</feature>
<feature type="mutagenesis site" description="Reduces ubiquitination." evidence="17">
    <original>K</original>
    <variation>R</variation>
    <location>
        <position position="242"/>
    </location>
</feature>
<feature type="mutagenesis site" description="Reduces ubiquitination. Strongly reduces ubiquitination; when associated with R-277." evidence="17">
    <original>K</original>
    <variation>R</variation>
    <location>
        <position position="271"/>
    </location>
</feature>
<feature type="mutagenesis site" description="Reduces ubiquitination. Strongly reduces ubiquitination; when associated with R-271." evidence="17">
    <original>K</original>
    <variation>R</variation>
    <location>
        <position position="277"/>
    </location>
</feature>
<feature type="sequence conflict" description="In Ref. 1; CAB50866." evidence="23" ref="1">
    <original>G</original>
    <variation>R</variation>
    <location>
        <position position="265"/>
    </location>
</feature>
<feature type="strand" evidence="28">
    <location>
        <begin position="13"/>
        <end position="23"/>
    </location>
</feature>
<feature type="helix" evidence="28">
    <location>
        <begin position="25"/>
        <end position="27"/>
    </location>
</feature>
<feature type="strand" evidence="28">
    <location>
        <begin position="31"/>
        <end position="40"/>
    </location>
</feature>
<feature type="helix" evidence="28">
    <location>
        <begin position="41"/>
        <end position="44"/>
    </location>
</feature>
<feature type="strand" evidence="28">
    <location>
        <begin position="65"/>
        <end position="70"/>
    </location>
</feature>
<feature type="helix" evidence="28">
    <location>
        <begin position="79"/>
        <end position="85"/>
    </location>
</feature>
<feature type="helix" evidence="28">
    <location>
        <begin position="89"/>
        <end position="94"/>
    </location>
</feature>
<feature type="helix" evidence="28">
    <location>
        <begin position="102"/>
        <end position="113"/>
    </location>
</feature>
<feature type="strand" evidence="28">
    <location>
        <begin position="117"/>
        <end position="123"/>
    </location>
</feature>
<feature type="turn" evidence="28">
    <location>
        <begin position="124"/>
        <end position="129"/>
    </location>
</feature>
<feature type="helix" evidence="28">
    <location>
        <begin position="130"/>
        <end position="140"/>
    </location>
</feature>
<feature type="turn" evidence="28">
    <location>
        <begin position="144"/>
        <end position="149"/>
    </location>
</feature>
<feature type="strand" evidence="28">
    <location>
        <begin position="151"/>
        <end position="154"/>
    </location>
</feature>
<feature type="helix" evidence="28">
    <location>
        <begin position="155"/>
        <end position="166"/>
    </location>
</feature>
<feature type="helix" evidence="28">
    <location>
        <begin position="179"/>
        <end position="187"/>
    </location>
</feature>
<feature type="turn" evidence="29">
    <location>
        <begin position="192"/>
        <end position="195"/>
    </location>
</feature>
<feature type="helix" evidence="28">
    <location>
        <begin position="197"/>
        <end position="208"/>
    </location>
</feature>
<feature type="helix" evidence="28">
    <location>
        <begin position="212"/>
        <end position="222"/>
    </location>
</feature>
<feature type="helix" evidence="28">
    <location>
        <begin position="226"/>
        <end position="228"/>
    </location>
</feature>
<feature type="strand" evidence="28">
    <location>
        <begin position="232"/>
        <end position="234"/>
    </location>
</feature>
<comment type="function">
    <text evidence="3 4 6 8 14 18 19">Major cellular 3'-to-5' DNA exonuclease which digests single-stranded DNA (ssDNA) and double-stranded DNA (dsDNA) with mismatched 3' termini (PubMed:10391904, PubMed:10393201, PubMed:17293595). Prevents cell-intrinsic initiation of autoimmunity (PubMed:10391904, PubMed:10393201, PubMed:17293595). Acts by metabolizing DNA fragments from endogenous retroelements, including L1, LTR and SINE elements (PubMed:10391904, PubMed:10393201, PubMed:17293595). Plays a key role in degradation of DNA fragments at cytosolic micronuclei arising from genome instability: its association with the endoplasmic reticulum membrane directs TREX1 to ruptured micronuclei, leading to micronuclear DNA degradation (PubMed:33476576). Micronuclear DNA degradation is required to limit CGAS activation and subsequent inflammation (PubMed:33476576). Unless degraded, these DNA fragments accumulate in the cytosol and activate the cGAS-STING innate immune signaling, leading to the production of type I interferon (PubMed:33476576). Prevents chronic ATM-dependent checkpoint activation, by processing ssDNA polynucleotide species arising from the processing of aberrant DNA replication intermediates (PubMed:18045533). Inefficiently degrades oxidized DNA, such as that generated upon antimicrobial reactive oxygen production or upon absorption of UV light (PubMed:23993650). During GZMA-mediated cell death, contributes to DNA damage in concert with NME1 (PubMed:16818237). NME1 nicks one strand of DNA and TREX1 removes bases from the free 3' end to enhance DNA damage and prevent DNA end reannealing and rapid repair (PubMed:16818237).</text>
</comment>
<comment type="catalytic activity">
    <reaction evidence="3 19">
        <text>Exonucleolytic cleavage in the 3'- to 5'-direction to yield nucleoside 5'-phosphates.</text>
        <dbReference type="EC" id="3.1.11.2"/>
    </reaction>
</comment>
<comment type="cofactor">
    <cofactor evidence="1">
        <name>Mg(2+)</name>
        <dbReference type="ChEBI" id="CHEBI:18420"/>
    </cofactor>
    <text evidence="1">Binds 2 Mg(2+) per subunit. The second magnesium ion interacts with only one residue. Substitution with Mn(2+) results in partial activity.</text>
</comment>
<comment type="subunit">
    <text evidence="1 6 17">Homodimer (By similarity). Interacts (via proline-rich region) with TCERG1/CA150 (via the second WW domain) (By similarity). Component of the SET complex, composed of at least ANP32A, APEX1, HMGB2, NME1, SET and TREX1 (PubMed:16818237). Within this complex, directly interacts with SET; this interaction does not result in TREX1 inhibition (PubMed:16818237). Also interacts with NME1, but only following translocation to the nucleus (PubMed:16818237). Directly interacts with UBQLN1 (via ubiquitin-like domain); the interaction may control TREX1 subcellular location (PubMed:23979357).</text>
</comment>
<comment type="interaction">
    <interactant intactId="EBI-16746122">
        <id>Q9NSU2-1</id>
    </interactant>
    <interactant intactId="EBI-13059134">
        <id>Q13520</id>
        <label>AQP6</label>
    </interactant>
    <organismsDiffer>false</organismsDiffer>
    <experiments>3</experiments>
</comment>
<comment type="interaction">
    <interactant intactId="EBI-16746122">
        <id>Q9NSU2-1</id>
    </interactant>
    <interactant intactId="EBI-712921">
        <id>P60033</id>
        <label>CD81</label>
    </interactant>
    <organismsDiffer>false</organismsDiffer>
    <experiments>3</experiments>
</comment>
<comment type="interaction">
    <interactant intactId="EBI-16746122">
        <id>Q9NSU2-1</id>
    </interactant>
    <interactant intactId="EBI-17766761">
        <id>Q8N7P3</id>
        <label>CLDN22</label>
    </interactant>
    <organismsDiffer>false</organismsDiffer>
    <experiments>3</experiments>
</comment>
<comment type="interaction">
    <interactant intactId="EBI-16746122">
        <id>Q9NSU2-1</id>
    </interactant>
    <interactant intactId="EBI-17233035">
        <id>Q9BUF7-2</id>
        <label>CRB3</label>
    </interactant>
    <organismsDiffer>false</organismsDiffer>
    <experiments>3</experiments>
</comment>
<comment type="interaction">
    <interactant intactId="EBI-16746122">
        <id>Q9NSU2-1</id>
    </interactant>
    <interactant intactId="EBI-8646596">
        <id>P49447</id>
        <label>CYB561</label>
    </interactant>
    <organismsDiffer>false</organismsDiffer>
    <experiments>3</experiments>
</comment>
<comment type="interaction">
    <interactant intactId="EBI-16746122">
        <id>Q9NSU2-1</id>
    </interactant>
    <interactant intactId="EBI-3867333">
        <id>A8MQ03</id>
        <label>CYSRT1</label>
    </interactant>
    <organismsDiffer>false</organismsDiffer>
    <experiments>3</experiments>
</comment>
<comment type="interaction">
    <interactant intactId="EBI-16746122">
        <id>Q9NSU2-1</id>
    </interactant>
    <interactant intactId="EBI-3915253">
        <id>Q15125</id>
        <label>EBP</label>
    </interactant>
    <organismsDiffer>false</organismsDiffer>
    <experiments>3</experiments>
</comment>
<comment type="interaction">
    <interactant intactId="EBI-16746122">
        <id>Q9NSU2-1</id>
    </interactant>
    <interactant intactId="EBI-18535450">
        <id>Q9GZR5</id>
        <label>ELOVL4</label>
    </interactant>
    <organismsDiffer>false</organismsDiffer>
    <experiments>3</experiments>
</comment>
<comment type="interaction">
    <interactant intactId="EBI-16746122">
        <id>Q9NSU2-1</id>
    </interactant>
    <interactant intactId="EBI-18636064">
        <id>Q8TBP5</id>
        <label>FAM174A</label>
    </interactant>
    <organismsDiffer>false</organismsDiffer>
    <experiments>3</experiments>
</comment>
<comment type="interaction">
    <interactant intactId="EBI-16746122">
        <id>Q9NSU2-1</id>
    </interactant>
    <interactant intactId="EBI-17762181">
        <id>O14843</id>
        <label>FFAR3</label>
    </interactant>
    <organismsDiffer>false</organismsDiffer>
    <experiments>3</experiments>
</comment>
<comment type="interaction">
    <interactant intactId="EBI-16746122">
        <id>Q9NSU2-1</id>
    </interactant>
    <interactant intactId="EBI-12142257">
        <id>Q8TBE3</id>
        <label>FNDC9</label>
    </interactant>
    <organismsDiffer>false</organismsDiffer>
    <experiments>3</experiments>
</comment>
<comment type="interaction">
    <interactant intactId="EBI-16746122">
        <id>Q9NSU2-1</id>
    </interactant>
    <interactant intactId="EBI-750433">
        <id>P36382</id>
        <label>GJA5</label>
    </interactant>
    <organismsDiffer>false</organismsDiffer>
    <experiments>3</experiments>
</comment>
<comment type="interaction">
    <interactant intactId="EBI-16746122">
        <id>Q9NSU2-1</id>
    </interactant>
    <interactant intactId="EBI-3933251">
        <id>Q9NS71</id>
        <label>GKN1</label>
    </interactant>
    <organismsDiffer>false</organismsDiffer>
    <experiments>3</experiments>
</comment>
<comment type="interaction">
    <interactant intactId="EBI-16746122">
        <id>Q9NSU2-1</id>
    </interactant>
    <interactant intactId="EBI-18076404">
        <id>O15529</id>
        <label>GPR42</label>
    </interactant>
    <organismsDiffer>false</organismsDiffer>
    <experiments>3</experiments>
</comment>
<comment type="interaction">
    <interactant intactId="EBI-16746122">
        <id>Q9NSU2-1</id>
    </interactant>
    <interactant intactId="EBI-18053395">
        <id>Q7Z5P4</id>
        <label>HSD17B13</label>
    </interactant>
    <organismsDiffer>false</organismsDiffer>
    <experiments>3</experiments>
</comment>
<comment type="interaction">
    <interactant intactId="EBI-16746122">
        <id>Q9NSU2-1</id>
    </interactant>
    <interactant intactId="EBI-3905457">
        <id>P38484</id>
        <label>IFNGR2</label>
    </interactant>
    <organismsDiffer>false</organismsDiffer>
    <experiments>3</experiments>
</comment>
<comment type="interaction">
    <interactant intactId="EBI-16746122">
        <id>Q9NSU2-1</id>
    </interactant>
    <interactant intactId="EBI-10266796">
        <id>Q8N5M9</id>
        <label>JAGN1</label>
    </interactant>
    <organismsDiffer>false</organismsDiffer>
    <experiments>3</experiments>
</comment>
<comment type="interaction">
    <interactant intactId="EBI-16746122">
        <id>Q9NSU2-1</id>
    </interactant>
    <interactant intactId="EBI-1055254">
        <id>Q8WXH2</id>
        <label>JPH3</label>
    </interactant>
    <organismsDiffer>false</organismsDiffer>
    <experiments>3</experiments>
</comment>
<comment type="interaction">
    <interactant intactId="EBI-16746122">
        <id>Q9NSU2-1</id>
    </interactant>
    <interactant intactId="EBI-10172290">
        <id>P60409</id>
        <label>KRTAP10-7</label>
    </interactant>
    <organismsDiffer>false</organismsDiffer>
    <experiments>6</experiments>
</comment>
<comment type="interaction">
    <interactant intactId="EBI-16746122">
        <id>Q9NSU2-1</id>
    </interactant>
    <interactant intactId="EBI-373355">
        <id>Q5SR56</id>
        <label>MFSD14B</label>
    </interactant>
    <organismsDiffer>false</organismsDiffer>
    <experiments>3</experiments>
</comment>
<comment type="interaction">
    <interactant intactId="EBI-16746122">
        <id>Q9NSU2-1</id>
    </interactant>
    <interactant intactId="EBI-594836">
        <id>O00623</id>
        <label>PEX12</label>
    </interactant>
    <organismsDiffer>false</organismsDiffer>
    <experiments>3</experiments>
</comment>
<comment type="interaction">
    <interactant intactId="EBI-16746122">
        <id>Q9NSU2-1</id>
    </interactant>
    <interactant intactId="EBI-17783836">
        <id>Q9UKY0</id>
        <label>PRND</label>
    </interactant>
    <organismsDiffer>false</organismsDiffer>
    <experiments>3</experiments>
</comment>
<comment type="interaction">
    <interactant intactId="EBI-16746122">
        <id>Q9NSU2-1</id>
    </interactant>
    <interactant intactId="EBI-11343385">
        <id>Q8IUW5</id>
        <label>RELL1</label>
    </interactant>
    <organismsDiffer>false</organismsDiffer>
    <experiments>3</experiments>
</comment>
<comment type="interaction">
    <interactant intactId="EBI-16746122">
        <id>Q9NSU2-1</id>
    </interactant>
    <interactant intactId="EBI-18397230">
        <id>Q6P5S7</id>
        <label>RNASEK</label>
    </interactant>
    <organismsDiffer>false</organismsDiffer>
    <experiments>3</experiments>
</comment>
<comment type="interaction">
    <interactant intactId="EBI-16746122">
        <id>Q9NSU2-1</id>
    </interactant>
    <interactant intactId="EBI-2855401">
        <id>Q9BY50</id>
        <label>SEC11C</label>
    </interactant>
    <organismsDiffer>false</organismsDiffer>
    <experiments>3</experiments>
</comment>
<comment type="interaction">
    <interactant intactId="EBI-16746122">
        <id>Q9NSU2-1</id>
    </interactant>
    <interactant intactId="EBI-18159983">
        <id>Q3KNW5</id>
        <label>SLC10A6</label>
    </interactant>
    <organismsDiffer>false</organismsDiffer>
    <experiments>3</experiments>
</comment>
<comment type="interaction">
    <interactant intactId="EBI-16746122">
        <id>Q9NSU2-1</id>
    </interactant>
    <interactant intactId="EBI-5235586">
        <id>Q8TBB6</id>
        <label>SLC7A14</label>
    </interactant>
    <organismsDiffer>false</organismsDiffer>
    <experiments>3</experiments>
</comment>
<comment type="interaction">
    <interactant intactId="EBI-16746122">
        <id>Q9NSU2-1</id>
    </interactant>
    <interactant intactId="EBI-13351685">
        <id>Q96CE8</id>
        <label>TM4SF18</label>
    </interactant>
    <organismsDiffer>false</organismsDiffer>
    <experiments>3</experiments>
</comment>
<comment type="interaction">
    <interactant intactId="EBI-16746122">
        <id>Q9NSU2-1</id>
    </interactant>
    <interactant intactId="EBI-6269551">
        <id>Q6UW68</id>
        <label>TMEM205</label>
    </interactant>
    <organismsDiffer>false</organismsDiffer>
    <experiments>3</experiments>
</comment>
<comment type="interaction">
    <interactant intactId="EBI-16746122">
        <id>Q9NSU2-1</id>
    </interactant>
    <interactant intactId="EBI-13301303">
        <id>Q6UWW9</id>
        <label>TMEM207</label>
    </interactant>
    <organismsDiffer>false</organismsDiffer>
    <experiments>3</experiments>
</comment>
<comment type="interaction">
    <interactant intactId="EBI-16746122">
        <id>Q9NSU2-1</id>
    </interactant>
    <interactant intactId="EBI-3923061">
        <id>Q96B21</id>
        <label>TMEM45B</label>
    </interactant>
    <organismsDiffer>false</organismsDiffer>
    <experiments>3</experiments>
</comment>
<comment type="interaction">
    <interactant intactId="EBI-16746122">
        <id>Q9NSU2-1</id>
    </interactant>
    <interactant intactId="EBI-2548832">
        <id>Q8N661</id>
        <label>TMEM86B</label>
    </interactant>
    <organismsDiffer>false</organismsDiffer>
    <experiments>3</experiments>
</comment>
<comment type="interaction">
    <interactant intactId="EBI-16746122">
        <id>Q9NSU2-1</id>
    </interactant>
    <interactant intactId="EBI-6447886">
        <id>Q9Y320</id>
        <label>TMX2</label>
    </interactant>
    <organismsDiffer>false</organismsDiffer>
    <experiments>3</experiments>
</comment>
<comment type="subcellular location">
    <subcellularLocation>
        <location evidence="4">Nucleus</location>
    </subcellularLocation>
    <subcellularLocation>
        <location evidence="6">Cytoplasm</location>
        <location evidence="6">Cytosol</location>
    </subcellularLocation>
    <subcellularLocation>
        <location evidence="19">Endoplasmic reticulum membrane</location>
        <topology evidence="19">Peripheral membrane protein</topology>
    </subcellularLocation>
    <text evidence="1 6 19">Retained in the cytoplasm through the C-terminal region (By similarity). Localization to the endoplasmic reticulum membrane is required to direct TREX1 to ruptured micronuclei (PubMed:33476576). In response to DNA damage, translocates to the nucleus where it is specifically recruited to replication foci (PubMed:16818237). Translocation to the nucleus also occurs during GZMA-mediated cell death (PubMed:16818237).</text>
</comment>
<comment type="alternative products">
    <event type="alternative splicing"/>
    <isoform>
        <id>Q9NSU2-3</id>
        <name>3</name>
        <sequence type="displayed"/>
    </isoform>
    <isoform>
        <id>Q9NSU2-1</id>
        <name>1</name>
        <sequence type="described" ref="VSP_059279"/>
    </isoform>
    <isoform>
        <id>Q9NSU2-2</id>
        <name>2</name>
        <sequence type="described" ref="VSP_010445"/>
    </isoform>
</comment>
<comment type="tissue specificity">
    <text evidence="4 5">Detected in thymus, spleen, liver, brain, heart, small intestine and colon.</text>
</comment>
<comment type="PTM">
    <text evidence="17">Ubiquitinated, but not targeted to proteasomal degradation. Ubiquitination may be important for interaction with UBQLN1.</text>
</comment>
<comment type="disease" evidence="7 8 9 13 14 15 16 17 19">
    <disease id="DI-00066">
        <name>Aicardi-Goutieres syndrome 1</name>
        <acronym>AGS1</acronym>
        <description>A form of Aicardi-Goutieres syndrome, a genetically heterogeneous disease characterized by cerebral atrophy, leukoencephalopathy, intracranial calcifications, chronic cerebrospinal fluid (CSF) lymphocytosis, increased CSF alpha-interferon, and negative serologic investigations for common prenatal infection. Clinical features as thrombocytopenia, hepatosplenomegaly and elevated hepatic transaminases along with intermittent fever may erroneously suggest an infective process. Severe neurological dysfunctions manifest in infancy as progressive microcephaly, spasticity, dystonic posturing and profound psychomotor retardation. Death often occurs in early childhood.</description>
        <dbReference type="MIM" id="225750"/>
    </disease>
    <text>The disease is caused by variants affecting the gene represented in this entry.</text>
</comment>
<comment type="disease" evidence="11 15 17">
    <disease id="DI-02648">
        <name>Systemic lupus erythematosus</name>
        <acronym>SLE</acronym>
        <description>A chronic, relapsing, inflammatory, and often febrile multisystemic disorder of connective tissue, characterized principally by involvement of the skin, joints, kidneys and serosal membranes. It is of unknown etiology, but is thought to represent a failure of the regulatory mechanisms of the autoimmune system. The disease is marked by a wide range of system dysfunctions, an elevated erythrocyte sedimentation rate, and the formation of LE cells in the blood or bone marrow.</description>
        <dbReference type="MIM" id="152700"/>
    </disease>
    <text evidence="18">Disease susceptibility is associated with variants affecting the gene represented in this entry. Enhanced immune sensing of oxidized DNA may be involved in the phototoxicity experienced by SLE patients. Exposure to UV-light produces DNA oxidative damage. Oxidized DNA being a poor TREX1 substrate, it accumulates in skin, leading to enhanced auto-immune reactivity and eventually skin lesions (PubMed:23993650).</text>
</comment>
<comment type="disease" evidence="9 10">
    <disease id="DI-01339">
        <name>Chilblain lupus 1</name>
        <acronym>CHBL1</acronym>
        <description>A rare cutaneous form of lupus erythematosus. Affected individuals present with painful bluish-red papular or nodular lesions of the skin in acral locations precipitated by cold and wet exposure.</description>
        <dbReference type="MIM" id="610448"/>
    </disease>
    <text>The disease is caused by variants affecting the gene represented in this entry.</text>
</comment>
<comment type="disease" evidence="12">
    <disease id="DI-00261">
        <name>Vasculopathy, retinal, with cerebral leukoencephalopathy and systemic manifestations</name>
        <acronym>RVCLS</acronym>
        <description>An adult-onset, autosomal dominant endotheliopathy affecting the microvessels of the brain. It results in central nervous system degeneration and retinopathy, with progressive loss of vision, stroke, motor impairment, and cognitive decline. The ocular manifestations are characterized by telangiectasias, microaneurysms and retinal capillary obliteration starting in the macula. Diseased cerebral white matter has prominent small infarcts that often coalesce to pseudotumors. A subset of patients have systemic vascular involvement that can manifest as Raynaud phenomenon, micronodular cirrhosis, and glomerular dysfunction.</description>
        <dbReference type="MIM" id="192315"/>
    </disease>
    <text>The disease is caused by variants affecting the gene represented in this entry.</text>
</comment>
<comment type="similarity">
    <text evidence="23">Belongs to the exonuclease superfamily. TREX family.</text>
</comment>
<comment type="caution">
    <text evidence="23">The gene for this protein is either identical to or adjacent to that of ATRIP. Some of the mRNAs that encode ATRIP also encode TREX1 in another reading frame.</text>
</comment>
<comment type="sequence caution" evidence="23">
    <conflict type="erroneous initiation">
        <sequence resource="EMBL-CDS" id="AAD48774"/>
    </conflict>
    <text>Truncated N-terminus.</text>
</comment>
<comment type="sequence caution" evidence="23">
    <conflict type="erroneous initiation">
        <sequence resource="EMBL-CDS" id="AAL82504"/>
    </conflict>
    <text>Truncated N-terminus.</text>
</comment>
<proteinExistence type="evidence at protein level"/>
<sequence length="314" mass="33212">MGSQALPPGPMQTLIFFDMEATGLPFSQPKVTELCLLAVHRCALESPPTSQGPPPTVPPPPRVVDKLSLCVAPGKACSPAASEITGLSTAVLAAHGRQCFDDNLANLLLAFLRRQPQPWCLVAHNGDRYDFPLLQAELAMLGLTSALDGAFCVDSITALKALERASSPSEHGPRKSYSLGSIYTRLYGQSPPDSHTAEGDVLALLSICQWRPQALLRWVDAHARPFGTIRPMYGVTASARTKPRPSAVTTTAHLATTRNTSPSLGESRGTKDLPPVKDPGALSREGLLAPLGLLAILTLAVATLYGLSLATPGE</sequence>
<name>TREX1_HUMAN</name>